<organism>
    <name type="scientific">Neurospora crassa (strain ATCC 24698 / 74-OR23-1A / CBS 708.71 / DSM 1257 / FGSC 987)</name>
    <dbReference type="NCBI Taxonomy" id="367110"/>
    <lineage>
        <taxon>Eukaryota</taxon>
        <taxon>Fungi</taxon>
        <taxon>Dikarya</taxon>
        <taxon>Ascomycota</taxon>
        <taxon>Pezizomycotina</taxon>
        <taxon>Sordariomycetes</taxon>
        <taxon>Sordariomycetidae</taxon>
        <taxon>Sordariales</taxon>
        <taxon>Sordariaceae</taxon>
        <taxon>Neurospora</taxon>
    </lineage>
</organism>
<reference key="1">
    <citation type="journal article" date="1993" name="J. Biol. Chem.">
        <title>Identification of a G protein alpha subunit from Neurospora crassa that is a member of the Gi family.</title>
        <authorList>
            <person name="Borkovich K.A."/>
            <person name="Turner G.E."/>
        </authorList>
    </citation>
    <scope>NUCLEOTIDE SEQUENCE [MRNA]</scope>
    <source>
        <strain>ATCC 24698 / 74-OR23-1A / CBS 708.71 / DSM 1257 / FGSC 987</strain>
    </source>
</reference>
<reference key="2">
    <citation type="submission" date="1996-04" db="EMBL/GenBank/DDBJ databases">
        <title>The G-alphai homologue Gna-1 controls multiple differentiation pathways in Neurospora crassa.</title>
        <authorList>
            <person name="Ivey F.D."/>
            <person name="Hodge P.N."/>
            <person name="Turner G.E."/>
            <person name="Borkovich K.A."/>
        </authorList>
    </citation>
    <scope>NUCLEOTIDE SEQUENCE [GENOMIC DNA]</scope>
    <source>
        <strain>ATCC 24698 / 74-OR23-1A / CBS 708.71 / DSM 1257 / FGSC 987</strain>
    </source>
</reference>
<reference key="3">
    <citation type="journal article" date="2003" name="Nature">
        <title>The genome sequence of the filamentous fungus Neurospora crassa.</title>
        <authorList>
            <person name="Galagan J.E."/>
            <person name="Calvo S.E."/>
            <person name="Borkovich K.A."/>
            <person name="Selker E.U."/>
            <person name="Read N.D."/>
            <person name="Jaffe D.B."/>
            <person name="FitzHugh W."/>
            <person name="Ma L.-J."/>
            <person name="Smirnov S."/>
            <person name="Purcell S."/>
            <person name="Rehman B."/>
            <person name="Elkins T."/>
            <person name="Engels R."/>
            <person name="Wang S."/>
            <person name="Nielsen C.B."/>
            <person name="Butler J."/>
            <person name="Endrizzi M."/>
            <person name="Qui D."/>
            <person name="Ianakiev P."/>
            <person name="Bell-Pedersen D."/>
            <person name="Nelson M.A."/>
            <person name="Werner-Washburne M."/>
            <person name="Selitrennikoff C.P."/>
            <person name="Kinsey J.A."/>
            <person name="Braun E.L."/>
            <person name="Zelter A."/>
            <person name="Schulte U."/>
            <person name="Kothe G.O."/>
            <person name="Jedd G."/>
            <person name="Mewes H.-W."/>
            <person name="Staben C."/>
            <person name="Marcotte E."/>
            <person name="Greenberg D."/>
            <person name="Roy A."/>
            <person name="Foley K."/>
            <person name="Naylor J."/>
            <person name="Stange-Thomann N."/>
            <person name="Barrett R."/>
            <person name="Gnerre S."/>
            <person name="Kamal M."/>
            <person name="Kamvysselis M."/>
            <person name="Mauceli E.W."/>
            <person name="Bielke C."/>
            <person name="Rudd S."/>
            <person name="Frishman D."/>
            <person name="Krystofova S."/>
            <person name="Rasmussen C."/>
            <person name="Metzenberg R.L."/>
            <person name="Perkins D.D."/>
            <person name="Kroken S."/>
            <person name="Cogoni C."/>
            <person name="Macino G."/>
            <person name="Catcheside D.E.A."/>
            <person name="Li W."/>
            <person name="Pratt R.J."/>
            <person name="Osmani S.A."/>
            <person name="DeSouza C.P.C."/>
            <person name="Glass N.L."/>
            <person name="Orbach M.J."/>
            <person name="Berglund J.A."/>
            <person name="Voelker R."/>
            <person name="Yarden O."/>
            <person name="Plamann M."/>
            <person name="Seiler S."/>
            <person name="Dunlap J.C."/>
            <person name="Radford A."/>
            <person name="Aramayo R."/>
            <person name="Natvig D.O."/>
            <person name="Alex L.A."/>
            <person name="Mannhaupt G."/>
            <person name="Ebbole D.J."/>
            <person name="Freitag M."/>
            <person name="Paulsen I."/>
            <person name="Sachs M.S."/>
            <person name="Lander E.S."/>
            <person name="Nusbaum C."/>
            <person name="Birren B.W."/>
        </authorList>
    </citation>
    <scope>NUCLEOTIDE SEQUENCE [LARGE SCALE GENOMIC DNA]</scope>
    <source>
        <strain>ATCC 24698 / 74-OR23-1A / CBS 708.71 / DSM 1257 / FGSC 987</strain>
    </source>
</reference>
<keyword id="KW-0342">GTP-binding</keyword>
<keyword id="KW-0378">Hydrolase</keyword>
<keyword id="KW-0449">Lipoprotein</keyword>
<keyword id="KW-0460">Magnesium</keyword>
<keyword id="KW-0479">Metal-binding</keyword>
<keyword id="KW-0519">Myristate</keyword>
<keyword id="KW-0547">Nucleotide-binding</keyword>
<keyword id="KW-0564">Palmitate</keyword>
<keyword id="KW-1185">Reference proteome</keyword>
<keyword id="KW-0807">Transducer</keyword>
<proteinExistence type="evidence at transcript level"/>
<sequence length="353" mass="40887">MGCGMSTEEKEGKARNEEIENQLKRDRMQQRNEIKMLLLGAGESGKSTILKQMKLIHEGGYSRDERESFKEIIFSNTVQSMRVILEAMESLELPLADQRVEYHVQTIFMQPAQIEGDVLPPEVGNAIEALWRDAGVQSCFKRSREYQLNDSARYYFDNIARIAAPDYMPNDQDVLRSRVKTTGITETTFIIGDLTYRMFDVGGQRSERKKWIHCFENVTTILFLVAISEYDQLLFEDETVNRMQEALTLFDSICNSRWFIKTSIILFLNKIDRFKEKLPVSPMKNYFPDYEGGDDYAAACDYILNRFVSLNQHETKQIYTHFTCATDTTQIRFVMAAVNDIIIQENLRLCGLI</sequence>
<accession>Q05425</accession>
<accession>P78705</accession>
<accession>Q7RV63</accession>
<protein>
    <recommendedName>
        <fullName>Guanine nucleotide-binding protein alpha-1 subunit</fullName>
    </recommendedName>
    <alternativeName>
        <fullName>GP1-alpha</fullName>
    </alternativeName>
</protein>
<name>GPA1_NEUCR</name>
<comment type="function">
    <text>Guanine nucleotide-binding proteins (G proteins) are involved as modulators or transducers in various transmembrane signaling systems.</text>
</comment>
<comment type="cofactor">
    <cofactor evidence="3">
        <name>Mg(2+)</name>
        <dbReference type="ChEBI" id="CHEBI:18420"/>
    </cofactor>
</comment>
<comment type="subunit">
    <text>G proteins are composed of 3 units; alpha, beta and gamma. The alpha chain contains the guanine nucleotide binding site.</text>
</comment>
<comment type="similarity">
    <text evidence="6">Belongs to the G-alpha family. G(q) subfamily.</text>
</comment>
<evidence type="ECO:0000250" key="1"/>
<evidence type="ECO:0000250" key="2">
    <source>
        <dbReference type="UniProtKB" id="P08539"/>
    </source>
</evidence>
<evidence type="ECO:0000250" key="3">
    <source>
        <dbReference type="UniProtKB" id="P18064"/>
    </source>
</evidence>
<evidence type="ECO:0000255" key="4">
    <source>
        <dbReference type="PROSITE-ProRule" id="PRU01230"/>
    </source>
</evidence>
<evidence type="ECO:0000256" key="5">
    <source>
        <dbReference type="SAM" id="MobiDB-lite"/>
    </source>
</evidence>
<evidence type="ECO:0000305" key="6"/>
<feature type="initiator methionine" description="Removed" evidence="1">
    <location>
        <position position="1"/>
    </location>
</feature>
<feature type="chain" id="PRO_0000203605" description="Guanine nucleotide-binding protein alpha-1 subunit">
    <location>
        <begin position="2"/>
        <end position="353"/>
    </location>
</feature>
<feature type="domain" description="G-alpha" evidence="4">
    <location>
        <begin position="32"/>
        <end position="353"/>
    </location>
</feature>
<feature type="region of interest" description="Disordered" evidence="5">
    <location>
        <begin position="1"/>
        <end position="26"/>
    </location>
</feature>
<feature type="region of interest" description="G1 motif" evidence="4">
    <location>
        <begin position="35"/>
        <end position="48"/>
    </location>
</feature>
<feature type="region of interest" description="G2 motif" evidence="4">
    <location>
        <begin position="173"/>
        <end position="181"/>
    </location>
</feature>
<feature type="region of interest" description="G3 motif" evidence="4">
    <location>
        <begin position="196"/>
        <end position="205"/>
    </location>
</feature>
<feature type="region of interest" description="G4 motif" evidence="4">
    <location>
        <begin position="265"/>
        <end position="272"/>
    </location>
</feature>
<feature type="region of interest" description="G5 motif" evidence="4">
    <location>
        <begin position="323"/>
        <end position="328"/>
    </location>
</feature>
<feature type="compositionally biased region" description="Basic and acidic residues" evidence="5">
    <location>
        <begin position="7"/>
        <end position="26"/>
    </location>
</feature>
<feature type="binding site" evidence="3">
    <location>
        <position position="43"/>
    </location>
    <ligand>
        <name>GTP</name>
        <dbReference type="ChEBI" id="CHEBI:37565"/>
    </ligand>
</feature>
<feature type="binding site" evidence="3">
    <location>
        <position position="44"/>
    </location>
    <ligand>
        <name>GTP</name>
        <dbReference type="ChEBI" id="CHEBI:37565"/>
    </ligand>
</feature>
<feature type="binding site" evidence="3">
    <location>
        <position position="45"/>
    </location>
    <ligand>
        <name>GTP</name>
        <dbReference type="ChEBI" id="CHEBI:37565"/>
    </ligand>
</feature>
<feature type="binding site" evidence="3">
    <location>
        <position position="46"/>
    </location>
    <ligand>
        <name>GTP</name>
        <dbReference type="ChEBI" id="CHEBI:37565"/>
    </ligand>
</feature>
<feature type="binding site" evidence="3">
    <location>
        <position position="47"/>
    </location>
    <ligand>
        <name>GTP</name>
        <dbReference type="ChEBI" id="CHEBI:37565"/>
    </ligand>
</feature>
<feature type="binding site" evidence="3">
    <location>
        <position position="47"/>
    </location>
    <ligand>
        <name>Mg(2+)</name>
        <dbReference type="ChEBI" id="CHEBI:18420"/>
    </ligand>
</feature>
<feature type="binding site" evidence="3">
    <location>
        <position position="48"/>
    </location>
    <ligand>
        <name>GTP</name>
        <dbReference type="ChEBI" id="CHEBI:37565"/>
    </ligand>
</feature>
<feature type="binding site" evidence="3">
    <location>
        <position position="150"/>
    </location>
    <ligand>
        <name>GTP</name>
        <dbReference type="ChEBI" id="CHEBI:37565"/>
    </ligand>
</feature>
<feature type="binding site" evidence="3">
    <location>
        <position position="175"/>
    </location>
    <ligand>
        <name>GTP</name>
        <dbReference type="ChEBI" id="CHEBI:37565"/>
    </ligand>
</feature>
<feature type="binding site" evidence="3">
    <location>
        <position position="181"/>
    </location>
    <ligand>
        <name>GTP</name>
        <dbReference type="ChEBI" id="CHEBI:37565"/>
    </ligand>
</feature>
<feature type="binding site" evidence="3">
    <location>
        <position position="181"/>
    </location>
    <ligand>
        <name>Mg(2+)</name>
        <dbReference type="ChEBI" id="CHEBI:18420"/>
    </ligand>
</feature>
<feature type="binding site" evidence="3">
    <location>
        <position position="203"/>
    </location>
    <ligand>
        <name>GTP</name>
        <dbReference type="ChEBI" id="CHEBI:37565"/>
    </ligand>
</feature>
<feature type="binding site" evidence="3">
    <location>
        <position position="269"/>
    </location>
    <ligand>
        <name>GTP</name>
        <dbReference type="ChEBI" id="CHEBI:37565"/>
    </ligand>
</feature>
<feature type="binding site" evidence="3">
    <location>
        <position position="270"/>
    </location>
    <ligand>
        <name>GTP</name>
        <dbReference type="ChEBI" id="CHEBI:37565"/>
    </ligand>
</feature>
<feature type="binding site" evidence="3">
    <location>
        <position position="272"/>
    </location>
    <ligand>
        <name>GTP</name>
        <dbReference type="ChEBI" id="CHEBI:37565"/>
    </ligand>
</feature>
<feature type="binding site" evidence="3">
    <location>
        <position position="325"/>
    </location>
    <ligand>
        <name>GTP</name>
        <dbReference type="ChEBI" id="CHEBI:37565"/>
    </ligand>
</feature>
<feature type="lipid moiety-binding region" description="N-myristoyl glycine" evidence="2">
    <location>
        <position position="2"/>
    </location>
</feature>
<feature type="lipid moiety-binding region" description="S-palmitoyl cysteine" evidence="2">
    <location>
        <position position="3"/>
    </location>
</feature>
<feature type="sequence conflict" description="In Ref. 2; AAB37244." evidence="6" ref="2">
    <original>ER</original>
    <variation>GA</variation>
    <location>
        <begin position="65"/>
        <end position="66"/>
    </location>
</feature>
<dbReference type="EMBL" id="L11453">
    <property type="protein sequence ID" value="AAA02560.1"/>
    <property type="molecule type" value="mRNA"/>
</dbReference>
<dbReference type="EMBL" id="U56090">
    <property type="protein sequence ID" value="AAB37244.1"/>
    <property type="molecule type" value="Genomic_DNA"/>
</dbReference>
<dbReference type="EMBL" id="CM002238">
    <property type="protein sequence ID" value="EAA27897.1"/>
    <property type="molecule type" value="Genomic_DNA"/>
</dbReference>
<dbReference type="PIR" id="T50482">
    <property type="entry name" value="T50482"/>
</dbReference>
<dbReference type="RefSeq" id="XP_957133.1">
    <property type="nucleotide sequence ID" value="XM_952040.2"/>
</dbReference>
<dbReference type="SMR" id="Q05425"/>
<dbReference type="FunCoup" id="Q05425">
    <property type="interactions" value="462"/>
</dbReference>
<dbReference type="STRING" id="367110.Q05425"/>
<dbReference type="PaxDb" id="5141-EFNCRP00000006216"/>
<dbReference type="EnsemblFungi" id="EAA27897">
    <property type="protein sequence ID" value="EAA27897"/>
    <property type="gene ID" value="NCU06493"/>
</dbReference>
<dbReference type="GeneID" id="3873271"/>
<dbReference type="KEGG" id="ncr:NCU06493"/>
<dbReference type="VEuPathDB" id="FungiDB:NCU06493"/>
<dbReference type="HOGENOM" id="CLU_014184_6_0_1"/>
<dbReference type="InParanoid" id="Q05425"/>
<dbReference type="OMA" id="QVIWADA"/>
<dbReference type="OrthoDB" id="5817230at2759"/>
<dbReference type="BRENDA" id="3.6.5.1">
    <property type="organism ID" value="3627"/>
</dbReference>
<dbReference type="Proteomes" id="UP000001805">
    <property type="component" value="Chromosome 3, Linkage Group III"/>
</dbReference>
<dbReference type="GO" id="GO:0005737">
    <property type="term" value="C:cytoplasm"/>
    <property type="evidence" value="ECO:0000318"/>
    <property type="project" value="GO_Central"/>
</dbReference>
<dbReference type="GO" id="GO:0005834">
    <property type="term" value="C:heterotrimeric G-protein complex"/>
    <property type="evidence" value="ECO:0000318"/>
    <property type="project" value="GO_Central"/>
</dbReference>
<dbReference type="GO" id="GO:0001664">
    <property type="term" value="F:G protein-coupled receptor binding"/>
    <property type="evidence" value="ECO:0000318"/>
    <property type="project" value="GO_Central"/>
</dbReference>
<dbReference type="GO" id="GO:0031683">
    <property type="term" value="F:G-protein beta/gamma-subunit complex binding"/>
    <property type="evidence" value="ECO:0000318"/>
    <property type="project" value="GO_Central"/>
</dbReference>
<dbReference type="GO" id="GO:0005525">
    <property type="term" value="F:GTP binding"/>
    <property type="evidence" value="ECO:0007669"/>
    <property type="project" value="UniProtKB-KW"/>
</dbReference>
<dbReference type="GO" id="GO:0003924">
    <property type="term" value="F:GTPase activity"/>
    <property type="evidence" value="ECO:0000318"/>
    <property type="project" value="GO_Central"/>
</dbReference>
<dbReference type="GO" id="GO:0046872">
    <property type="term" value="F:metal ion binding"/>
    <property type="evidence" value="ECO:0007669"/>
    <property type="project" value="UniProtKB-KW"/>
</dbReference>
<dbReference type="GO" id="GO:0007186">
    <property type="term" value="P:G protein-coupled receptor signaling pathway"/>
    <property type="evidence" value="ECO:0007669"/>
    <property type="project" value="InterPro"/>
</dbReference>
<dbReference type="GO" id="GO:0000750">
    <property type="term" value="P:pheromone-dependent signal transduction involved in conjugation with cellular fusion"/>
    <property type="evidence" value="ECO:0000318"/>
    <property type="project" value="GO_Central"/>
</dbReference>
<dbReference type="CDD" id="cd00066">
    <property type="entry name" value="G-alpha"/>
    <property type="match status" value="1"/>
</dbReference>
<dbReference type="FunFam" id="1.10.400.10:FF:000001">
    <property type="entry name" value="Guanine nucleotide-binding protein G(I) subunit alpha"/>
    <property type="match status" value="1"/>
</dbReference>
<dbReference type="FunFam" id="3.40.50.300:FF:000051">
    <property type="entry name" value="Guanine nucleotide-binding protein subunit alpha"/>
    <property type="match status" value="1"/>
</dbReference>
<dbReference type="FunFam" id="3.40.50.300:FF:000692">
    <property type="entry name" value="Guanine nucleotide-binding protein subunit alpha"/>
    <property type="match status" value="1"/>
</dbReference>
<dbReference type="Gene3D" id="1.10.400.10">
    <property type="entry name" value="GI Alpha 1, domain 2-like"/>
    <property type="match status" value="1"/>
</dbReference>
<dbReference type="Gene3D" id="3.40.50.300">
    <property type="entry name" value="P-loop containing nucleotide triphosphate hydrolases"/>
    <property type="match status" value="1"/>
</dbReference>
<dbReference type="InterPro" id="IPR002975">
    <property type="entry name" value="Fungi_Gprotein_alpha"/>
</dbReference>
<dbReference type="InterPro" id="IPR001019">
    <property type="entry name" value="Gprotein_alpha_su"/>
</dbReference>
<dbReference type="InterPro" id="IPR011025">
    <property type="entry name" value="GproteinA_insert"/>
</dbReference>
<dbReference type="InterPro" id="IPR027417">
    <property type="entry name" value="P-loop_NTPase"/>
</dbReference>
<dbReference type="PANTHER" id="PTHR10218">
    <property type="entry name" value="GTP-BINDING PROTEIN ALPHA SUBUNIT"/>
    <property type="match status" value="1"/>
</dbReference>
<dbReference type="PANTHER" id="PTHR10218:SF302">
    <property type="entry name" value="GUANINE NUCLEOTIDE-BINDING PROTEIN ALPHA-5 SUBUNIT"/>
    <property type="match status" value="1"/>
</dbReference>
<dbReference type="Pfam" id="PF00503">
    <property type="entry name" value="G-alpha"/>
    <property type="match status" value="1"/>
</dbReference>
<dbReference type="PRINTS" id="PR00318">
    <property type="entry name" value="GPROTEINA"/>
</dbReference>
<dbReference type="PRINTS" id="PR01241">
    <property type="entry name" value="GPROTEINAFNG"/>
</dbReference>
<dbReference type="SMART" id="SM00275">
    <property type="entry name" value="G_alpha"/>
    <property type="match status" value="1"/>
</dbReference>
<dbReference type="SUPFAM" id="SSF52540">
    <property type="entry name" value="P-loop containing nucleoside triphosphate hydrolases"/>
    <property type="match status" value="1"/>
</dbReference>
<dbReference type="SUPFAM" id="SSF47895">
    <property type="entry name" value="Transducin (alpha subunit), insertion domain"/>
    <property type="match status" value="1"/>
</dbReference>
<dbReference type="PROSITE" id="PS51882">
    <property type="entry name" value="G_ALPHA"/>
    <property type="match status" value="1"/>
</dbReference>
<gene>
    <name type="primary">gna-1</name>
    <name type="ORF">NCU06493</name>
</gene>